<reference key="1">
    <citation type="journal article" date="2005" name="Nature">
        <title>The map-based sequence of the rice genome.</title>
        <authorList>
            <consortium name="International rice genome sequencing project (IRGSP)"/>
        </authorList>
    </citation>
    <scope>NUCLEOTIDE SEQUENCE [LARGE SCALE GENOMIC DNA]</scope>
    <source>
        <strain>cv. Nipponbare</strain>
    </source>
</reference>
<reference key="2">
    <citation type="journal article" date="2008" name="Nucleic Acids Res.">
        <title>The rice annotation project database (RAP-DB): 2008 update.</title>
        <authorList>
            <consortium name="The rice annotation project (RAP)"/>
        </authorList>
    </citation>
    <scope>GENOME REANNOTATION</scope>
    <source>
        <strain>cv. Nipponbare</strain>
    </source>
</reference>
<reference key="3">
    <citation type="journal article" date="2013" name="Rice">
        <title>Improvement of the Oryza sativa Nipponbare reference genome using next generation sequence and optical map data.</title>
        <authorList>
            <person name="Kawahara Y."/>
            <person name="de la Bastide M."/>
            <person name="Hamilton J.P."/>
            <person name="Kanamori H."/>
            <person name="McCombie W.R."/>
            <person name="Ouyang S."/>
            <person name="Schwartz D.C."/>
            <person name="Tanaka T."/>
            <person name="Wu J."/>
            <person name="Zhou S."/>
            <person name="Childs K.L."/>
            <person name="Davidson R.M."/>
            <person name="Lin H."/>
            <person name="Quesada-Ocampo L."/>
            <person name="Vaillancourt B."/>
            <person name="Sakai H."/>
            <person name="Lee S.S."/>
            <person name="Kim J."/>
            <person name="Numa H."/>
            <person name="Itoh T."/>
            <person name="Buell C.R."/>
            <person name="Matsumoto T."/>
        </authorList>
    </citation>
    <scope>GENOME REANNOTATION</scope>
    <source>
        <strain>cv. Nipponbare</strain>
    </source>
</reference>
<reference key="4">
    <citation type="journal article" date="2005" name="PLoS Biol.">
        <title>The genomes of Oryza sativa: a history of duplications.</title>
        <authorList>
            <person name="Yu J."/>
            <person name="Wang J."/>
            <person name="Lin W."/>
            <person name="Li S."/>
            <person name="Li H."/>
            <person name="Zhou J."/>
            <person name="Ni P."/>
            <person name="Dong W."/>
            <person name="Hu S."/>
            <person name="Zeng C."/>
            <person name="Zhang J."/>
            <person name="Zhang Y."/>
            <person name="Li R."/>
            <person name="Xu Z."/>
            <person name="Li S."/>
            <person name="Li X."/>
            <person name="Zheng H."/>
            <person name="Cong L."/>
            <person name="Lin L."/>
            <person name="Yin J."/>
            <person name="Geng J."/>
            <person name="Li G."/>
            <person name="Shi J."/>
            <person name="Liu J."/>
            <person name="Lv H."/>
            <person name="Li J."/>
            <person name="Wang J."/>
            <person name="Deng Y."/>
            <person name="Ran L."/>
            <person name="Shi X."/>
            <person name="Wang X."/>
            <person name="Wu Q."/>
            <person name="Li C."/>
            <person name="Ren X."/>
            <person name="Wang J."/>
            <person name="Wang X."/>
            <person name="Li D."/>
            <person name="Liu D."/>
            <person name="Zhang X."/>
            <person name="Ji Z."/>
            <person name="Zhao W."/>
            <person name="Sun Y."/>
            <person name="Zhang Z."/>
            <person name="Bao J."/>
            <person name="Han Y."/>
            <person name="Dong L."/>
            <person name="Ji J."/>
            <person name="Chen P."/>
            <person name="Wu S."/>
            <person name="Liu J."/>
            <person name="Xiao Y."/>
            <person name="Bu D."/>
            <person name="Tan J."/>
            <person name="Yang L."/>
            <person name="Ye C."/>
            <person name="Zhang J."/>
            <person name="Xu J."/>
            <person name="Zhou Y."/>
            <person name="Yu Y."/>
            <person name="Zhang B."/>
            <person name="Zhuang S."/>
            <person name="Wei H."/>
            <person name="Liu B."/>
            <person name="Lei M."/>
            <person name="Yu H."/>
            <person name="Li Y."/>
            <person name="Xu H."/>
            <person name="Wei S."/>
            <person name="He X."/>
            <person name="Fang L."/>
            <person name="Zhang Z."/>
            <person name="Zhang Y."/>
            <person name="Huang X."/>
            <person name="Su Z."/>
            <person name="Tong W."/>
            <person name="Li J."/>
            <person name="Tong Z."/>
            <person name="Li S."/>
            <person name="Ye J."/>
            <person name="Wang L."/>
            <person name="Fang L."/>
            <person name="Lei T."/>
            <person name="Chen C.-S."/>
            <person name="Chen H.-C."/>
            <person name="Xu Z."/>
            <person name="Li H."/>
            <person name="Huang H."/>
            <person name="Zhang F."/>
            <person name="Xu H."/>
            <person name="Li N."/>
            <person name="Zhao C."/>
            <person name="Li S."/>
            <person name="Dong L."/>
            <person name="Huang Y."/>
            <person name="Li L."/>
            <person name="Xi Y."/>
            <person name="Qi Q."/>
            <person name="Li W."/>
            <person name="Zhang B."/>
            <person name="Hu W."/>
            <person name="Zhang Y."/>
            <person name="Tian X."/>
            <person name="Jiao Y."/>
            <person name="Liang X."/>
            <person name="Jin J."/>
            <person name="Gao L."/>
            <person name="Zheng W."/>
            <person name="Hao B."/>
            <person name="Liu S.-M."/>
            <person name="Wang W."/>
            <person name="Yuan L."/>
            <person name="Cao M."/>
            <person name="McDermott J."/>
            <person name="Samudrala R."/>
            <person name="Wang J."/>
            <person name="Wong G.K.-S."/>
            <person name="Yang H."/>
        </authorList>
    </citation>
    <scope>NUCLEOTIDE SEQUENCE [LARGE SCALE GENOMIC DNA]</scope>
    <source>
        <strain>cv. Nipponbare</strain>
    </source>
</reference>
<reference key="5">
    <citation type="journal article" date="2003" name="Science">
        <title>Collection, mapping, and annotation of over 28,000 cDNA clones from japonica rice.</title>
        <authorList>
            <consortium name="The rice full-length cDNA consortium"/>
        </authorList>
    </citation>
    <scope>NUCLEOTIDE SEQUENCE [LARGE SCALE MRNA]</scope>
    <source>
        <strain>cv. Nipponbare</strain>
    </source>
</reference>
<protein>
    <recommendedName>
        <fullName>Probable AMP deaminase</fullName>
        <ecNumber>3.5.4.6</ecNumber>
    </recommendedName>
</protein>
<dbReference type="EC" id="3.5.4.6"/>
<dbReference type="EMBL" id="AP004333">
    <property type="protein sequence ID" value="BAC75568.1"/>
    <property type="molecule type" value="Genomic_DNA"/>
</dbReference>
<dbReference type="EMBL" id="AP008213">
    <property type="protein sequence ID" value="BAF22644.1"/>
    <property type="molecule type" value="Genomic_DNA"/>
</dbReference>
<dbReference type="EMBL" id="AP014963">
    <property type="protein sequence ID" value="BAT03357.1"/>
    <property type="molecule type" value="Genomic_DNA"/>
</dbReference>
<dbReference type="EMBL" id="CM000144">
    <property type="protein sequence ID" value="EAZ41190.1"/>
    <property type="molecule type" value="Genomic_DNA"/>
</dbReference>
<dbReference type="EMBL" id="AK064333">
    <property type="status" value="NOT_ANNOTATED_CDS"/>
    <property type="molecule type" value="mRNA"/>
</dbReference>
<dbReference type="EMBL" id="AK102007">
    <property type="status" value="NOT_ANNOTATED_CDS"/>
    <property type="molecule type" value="mRNA"/>
</dbReference>
<dbReference type="RefSeq" id="XP_015646516.1">
    <property type="nucleotide sequence ID" value="XM_015791030.1"/>
</dbReference>
<dbReference type="SMR" id="Q84NP7"/>
<dbReference type="FunCoup" id="Q84NP7">
    <property type="interactions" value="2701"/>
</dbReference>
<dbReference type="STRING" id="39947.Q84NP7"/>
<dbReference type="PaxDb" id="39947-Q84NP7"/>
<dbReference type="EnsemblPlants" id="Os07t0693500-01">
    <property type="protein sequence ID" value="Os07t0693500-01"/>
    <property type="gene ID" value="Os07g0693500"/>
</dbReference>
<dbReference type="Gramene" id="Os07t0693500-01">
    <property type="protein sequence ID" value="Os07t0693500-01"/>
    <property type="gene ID" value="Os07g0693500"/>
</dbReference>
<dbReference type="KEGG" id="dosa:Os07g0693500"/>
<dbReference type="eggNOG" id="KOG1096">
    <property type="taxonomic scope" value="Eukaryota"/>
</dbReference>
<dbReference type="HOGENOM" id="CLU_003782_3_0_1"/>
<dbReference type="InParanoid" id="Q84NP7"/>
<dbReference type="OMA" id="GNAGPEC"/>
<dbReference type="OrthoDB" id="1723809at2759"/>
<dbReference type="UniPathway" id="UPA00591">
    <property type="reaction ID" value="UER00663"/>
</dbReference>
<dbReference type="Proteomes" id="UP000000763">
    <property type="component" value="Chromosome 7"/>
</dbReference>
<dbReference type="Proteomes" id="UP000007752">
    <property type="component" value="Chromosome 7"/>
</dbReference>
<dbReference type="Proteomes" id="UP000059680">
    <property type="component" value="Chromosome 7"/>
</dbReference>
<dbReference type="ExpressionAtlas" id="Q84NP7">
    <property type="expression patterns" value="baseline and differential"/>
</dbReference>
<dbReference type="GO" id="GO:0005829">
    <property type="term" value="C:cytosol"/>
    <property type="evidence" value="ECO:0000318"/>
    <property type="project" value="GO_Central"/>
</dbReference>
<dbReference type="GO" id="GO:0016020">
    <property type="term" value="C:membrane"/>
    <property type="evidence" value="ECO:0007669"/>
    <property type="project" value="UniProtKB-SubCell"/>
</dbReference>
<dbReference type="GO" id="GO:0003876">
    <property type="term" value="F:AMP deaminase activity"/>
    <property type="evidence" value="ECO:0000318"/>
    <property type="project" value="GO_Central"/>
</dbReference>
<dbReference type="GO" id="GO:0046872">
    <property type="term" value="F:metal ion binding"/>
    <property type="evidence" value="ECO:0007669"/>
    <property type="project" value="UniProtKB-KW"/>
</dbReference>
<dbReference type="GO" id="GO:0046033">
    <property type="term" value="P:AMP metabolic process"/>
    <property type="evidence" value="ECO:0000318"/>
    <property type="project" value="GO_Central"/>
</dbReference>
<dbReference type="GO" id="GO:0006188">
    <property type="term" value="P:IMP biosynthetic process"/>
    <property type="evidence" value="ECO:0000318"/>
    <property type="project" value="GO_Central"/>
</dbReference>
<dbReference type="GO" id="GO:0032264">
    <property type="term" value="P:IMP salvage"/>
    <property type="evidence" value="ECO:0007669"/>
    <property type="project" value="UniProtKB-UniPathway"/>
</dbReference>
<dbReference type="CDD" id="cd01319">
    <property type="entry name" value="AMPD"/>
    <property type="match status" value="1"/>
</dbReference>
<dbReference type="FunFam" id="3.20.20.140:FF:000216">
    <property type="entry name" value="AMP deaminase"/>
    <property type="match status" value="1"/>
</dbReference>
<dbReference type="FunFam" id="4.10.800.20:FF:000001">
    <property type="entry name" value="AMP deaminase"/>
    <property type="match status" value="1"/>
</dbReference>
<dbReference type="FunFam" id="3.20.20.140:FF:000035">
    <property type="entry name" value="Probable amp deaminase"/>
    <property type="match status" value="1"/>
</dbReference>
<dbReference type="Gene3D" id="4.10.800.20">
    <property type="match status" value="1"/>
</dbReference>
<dbReference type="Gene3D" id="3.20.20.140">
    <property type="entry name" value="Metal-dependent hydrolases"/>
    <property type="match status" value="1"/>
</dbReference>
<dbReference type="InterPro" id="IPR006650">
    <property type="entry name" value="A/AMP_deam_AS"/>
</dbReference>
<dbReference type="InterPro" id="IPR006329">
    <property type="entry name" value="AMPD"/>
</dbReference>
<dbReference type="InterPro" id="IPR032466">
    <property type="entry name" value="Metal_Hydrolase"/>
</dbReference>
<dbReference type="NCBIfam" id="TIGR01429">
    <property type="entry name" value="AMP_deaminase"/>
    <property type="match status" value="1"/>
</dbReference>
<dbReference type="PANTHER" id="PTHR11359">
    <property type="entry name" value="AMP DEAMINASE"/>
    <property type="match status" value="1"/>
</dbReference>
<dbReference type="PANTHER" id="PTHR11359:SF10">
    <property type="entry name" value="AMP DEAMINASE-RELATED"/>
    <property type="match status" value="1"/>
</dbReference>
<dbReference type="Pfam" id="PF19326">
    <property type="entry name" value="AMP_deaminase"/>
    <property type="match status" value="1"/>
</dbReference>
<dbReference type="SUPFAM" id="SSF51556">
    <property type="entry name" value="Metallo-dependent hydrolases"/>
    <property type="match status" value="1"/>
</dbReference>
<dbReference type="PROSITE" id="PS00485">
    <property type="entry name" value="A_DEAMINASE"/>
    <property type="match status" value="1"/>
</dbReference>
<evidence type="ECO:0000250" key="1"/>
<evidence type="ECO:0000255" key="2"/>
<evidence type="ECO:0000255" key="3">
    <source>
        <dbReference type="PROSITE-ProRule" id="PRU10104"/>
    </source>
</evidence>
<evidence type="ECO:0000256" key="4">
    <source>
        <dbReference type="SAM" id="MobiDB-lite"/>
    </source>
</evidence>
<evidence type="ECO:0000305" key="5"/>
<evidence type="ECO:0000312" key="6">
    <source>
        <dbReference type="EMBL" id="EAZ41190.1"/>
    </source>
</evidence>
<feature type="chain" id="PRO_0000238456" description="Probable AMP deaminase">
    <location>
        <begin position="1"/>
        <end position="815"/>
    </location>
</feature>
<feature type="transmembrane region" description="Helical" evidence="2">
    <location>
        <begin position="5"/>
        <end position="27"/>
    </location>
</feature>
<feature type="region of interest" description="Disordered" evidence="4">
    <location>
        <begin position="53"/>
        <end position="116"/>
    </location>
</feature>
<feature type="region of interest" description="Disordered" evidence="4">
    <location>
        <begin position="144"/>
        <end position="173"/>
    </location>
</feature>
<feature type="compositionally biased region" description="Low complexity" evidence="4">
    <location>
        <begin position="105"/>
        <end position="116"/>
    </location>
</feature>
<feature type="compositionally biased region" description="Polar residues" evidence="4">
    <location>
        <begin position="159"/>
        <end position="173"/>
    </location>
</feature>
<feature type="active site" description="Proton acceptor" evidence="3">
    <location>
        <position position="657"/>
    </location>
</feature>
<feature type="binding site" evidence="1">
    <location>
        <position position="367"/>
    </location>
    <ligand>
        <name>Zn(2+)</name>
        <dbReference type="ChEBI" id="CHEBI:29105"/>
        <note>catalytic</note>
    </ligand>
</feature>
<feature type="binding site" evidence="1">
    <location>
        <position position="369"/>
    </location>
    <ligand>
        <name>substrate</name>
    </ligand>
</feature>
<feature type="binding site" evidence="1">
    <location>
        <position position="369"/>
    </location>
    <ligand>
        <name>Zn(2+)</name>
        <dbReference type="ChEBI" id="CHEBI:29105"/>
        <note>catalytic</note>
    </ligand>
</feature>
<feature type="binding site" evidence="1">
    <location>
        <begin position="438"/>
        <end position="443"/>
    </location>
    <ligand>
        <name>substrate</name>
    </ligand>
</feature>
<feature type="binding site" evidence="1">
    <location>
        <position position="635"/>
    </location>
    <ligand>
        <name>Zn(2+)</name>
        <dbReference type="ChEBI" id="CHEBI:29105"/>
        <note>catalytic</note>
    </ligand>
</feature>
<feature type="binding site" evidence="1">
    <location>
        <position position="638"/>
    </location>
    <ligand>
        <name>substrate</name>
    </ligand>
</feature>
<feature type="binding site" evidence="1">
    <location>
        <position position="712"/>
    </location>
    <ligand>
        <name>Zn(2+)</name>
        <dbReference type="ChEBI" id="CHEBI:29105"/>
        <note>catalytic</note>
    </ligand>
</feature>
<feature type="binding site" evidence="1">
    <location>
        <begin position="713"/>
        <end position="716"/>
    </location>
    <ligand>
        <name>substrate</name>
    </ligand>
</feature>
<organism>
    <name type="scientific">Oryza sativa subsp. japonica</name>
    <name type="common">Rice</name>
    <dbReference type="NCBI Taxonomy" id="39947"/>
    <lineage>
        <taxon>Eukaryota</taxon>
        <taxon>Viridiplantae</taxon>
        <taxon>Streptophyta</taxon>
        <taxon>Embryophyta</taxon>
        <taxon>Tracheophyta</taxon>
        <taxon>Spermatophyta</taxon>
        <taxon>Magnoliopsida</taxon>
        <taxon>Liliopsida</taxon>
        <taxon>Poales</taxon>
        <taxon>Poaceae</taxon>
        <taxon>BOP clade</taxon>
        <taxon>Oryzoideae</taxon>
        <taxon>Oryzeae</taxon>
        <taxon>Oryzinae</taxon>
        <taxon>Oryza</taxon>
        <taxon>Oryza sativa</taxon>
    </lineage>
</organism>
<sequence>MDSTYALHLAVATLLGASFAAASAYYMHRKTLDQLLRFARSLDRDHRRRNRHLLDADDDDDDDPPRDHDRRTTLPIPPGLPPLHTGREGKPIISPASTKRVGPLVRPTTPRSPVPTVSAFETIEDSDDDDENIAPDAKNNAVSLLTNGTIGSDPLPGKASQNGDTKPVPSTNMIRSQSATGSLHGAQHNPVAADILRKEPEHETFSRINITAVETPSPDEIEAYKVLQKCLELREKYMFREEVAPWEKEIITDPSTPKPNPNPFYYEQQTKTEHHFEMVDGVIHVYPNKDAKERIYPVADATTFFTDMHYILRVLAAGDIRTVCYKRLNLLEQKFNLHLMVNADRELLAQKAAPHRDFYNVRKVDTHVHHSACMNQKHLLRFIKSKLRKEPDEVVIFRDGTYLTLKEVFESLDLTGYDLNVDLLDVHADKSTFHRFDKFNLKYNPCGQSRLREIFLKQDNLIQGRFLAELTKEVFSDLEASKYQMAEYRISIYGRKKSEWDQMASWIVNNELYSENVVWLIQIPRIYNVYREMGTINSFQNLLDNIFLPLFEVTVDPASHPQLHVFLQQVVGLDLVDDESKPERRPTKHMPTPEQWTNVFNPAYAYYVYYCYANLYTLNKLRESKGMTTIKLRPHCGEAGDIDHLAAAFLTSHNIAHGVNLKKSPVLQYLYYLAQIGLAMSPLSNNSLFIDYHRNPFPTFFLRGLNVSLSTDDPLQIHLTKEPLVEEYSIAASLWKLSSCDLCEIARNSVYQSGFSHRLKSHWIGRNYYKRGHDGNDIHQTNVPHIRIEFRHTIWKEEMELIHLRNVDIPEEIDR</sequence>
<gene>
    <name type="primary">AMPD</name>
    <name type="ordered locus">Os07g0693500</name>
    <name type="ordered locus">LOC_Os07g49270</name>
    <name evidence="6" type="ORF">OsJ_25692</name>
    <name type="ORF">P0034A04.129</name>
</gene>
<comment type="function">
    <text evidence="1">AMP deaminase plays a critical role in energy metabolism.</text>
</comment>
<comment type="catalytic activity">
    <reaction>
        <text>AMP + H2O + H(+) = IMP + NH4(+)</text>
        <dbReference type="Rhea" id="RHEA:14777"/>
        <dbReference type="ChEBI" id="CHEBI:15377"/>
        <dbReference type="ChEBI" id="CHEBI:15378"/>
        <dbReference type="ChEBI" id="CHEBI:28938"/>
        <dbReference type="ChEBI" id="CHEBI:58053"/>
        <dbReference type="ChEBI" id="CHEBI:456215"/>
        <dbReference type="EC" id="3.5.4.6"/>
    </reaction>
</comment>
<comment type="cofactor">
    <cofactor evidence="1">
        <name>Zn(2+)</name>
        <dbReference type="ChEBI" id="CHEBI:29105"/>
    </cofactor>
    <text evidence="1">Binds 1 zinc ion per subunit.</text>
</comment>
<comment type="pathway">
    <text>Purine metabolism; IMP biosynthesis via salvage pathway; IMP from AMP: step 1/1.</text>
</comment>
<comment type="subunit">
    <text evidence="1">Homodimer.</text>
</comment>
<comment type="subcellular location">
    <subcellularLocation>
        <location>Membrane</location>
        <topology>Single-pass membrane protein</topology>
    </subcellularLocation>
    <text evidence="1">Might be associated with the inner mitochondrial membrane.</text>
</comment>
<comment type="similarity">
    <text evidence="5">Belongs to the metallo-dependent hydrolases superfamily. Adenosine and AMP deaminases family.</text>
</comment>
<proteinExistence type="evidence at transcript level"/>
<name>AMPD_ORYSJ</name>
<keyword id="KW-0378">Hydrolase</keyword>
<keyword id="KW-0472">Membrane</keyword>
<keyword id="KW-0479">Metal-binding</keyword>
<keyword id="KW-0546">Nucleotide metabolism</keyword>
<keyword id="KW-1185">Reference proteome</keyword>
<keyword id="KW-0812">Transmembrane</keyword>
<keyword id="KW-1133">Transmembrane helix</keyword>
<keyword id="KW-0862">Zinc</keyword>
<accession>Q84NP7</accession>
<accession>Q0D3C9</accession>